<protein>
    <recommendedName>
        <fullName evidence="1">Single-stranded DNA-binding protein</fullName>
        <shortName evidence="1">SSB</shortName>
    </recommendedName>
</protein>
<sequence length="163" mass="17982">MINNVVLVGRMTKDAELRYTPSQVAVATFTLAVNRTFKSQNGEREADFINCVIWRQPAENLANWAKKGALIGVTGRIQTRNYENQQGQRVYVTEVVADNFQMLESRATREGGSTGSFNGGFNNNTSSSNSYSAPAQQTPNFGRDDSPFGNSNPMDISDDDLPF</sequence>
<gene>
    <name type="primary">ssb</name>
    <name type="ordered locus">SPs0286</name>
</gene>
<reference key="1">
    <citation type="journal article" date="2003" name="Genome Res.">
        <title>Genome sequence of an M3 strain of Streptococcus pyogenes reveals a large-scale genomic rearrangement in invasive strains and new insights into phage evolution.</title>
        <authorList>
            <person name="Nakagawa I."/>
            <person name="Kurokawa K."/>
            <person name="Yamashita A."/>
            <person name="Nakata M."/>
            <person name="Tomiyasu Y."/>
            <person name="Okahashi N."/>
            <person name="Kawabata S."/>
            <person name="Yamazaki K."/>
            <person name="Shiba T."/>
            <person name="Yasunaga T."/>
            <person name="Hayashi H."/>
            <person name="Hattori M."/>
            <person name="Hamada S."/>
        </authorList>
    </citation>
    <scope>NUCLEOTIDE SEQUENCE [LARGE SCALE GENOMIC DNA]</scope>
    <source>
        <strain>SSI-1</strain>
    </source>
</reference>
<name>SSB_STRPQ</name>
<keyword id="KW-0227">DNA damage</keyword>
<keyword id="KW-0233">DNA recombination</keyword>
<keyword id="KW-0234">DNA repair</keyword>
<keyword id="KW-0235">DNA replication</keyword>
<keyword id="KW-0238">DNA-binding</keyword>
<organism>
    <name type="scientific">Streptococcus pyogenes serotype M3 (strain SSI-1)</name>
    <dbReference type="NCBI Taxonomy" id="193567"/>
    <lineage>
        <taxon>Bacteria</taxon>
        <taxon>Bacillati</taxon>
        <taxon>Bacillota</taxon>
        <taxon>Bacilli</taxon>
        <taxon>Lactobacillales</taxon>
        <taxon>Streptococcaceae</taxon>
        <taxon>Streptococcus</taxon>
    </lineage>
</organism>
<evidence type="ECO:0000255" key="1">
    <source>
        <dbReference type="HAMAP-Rule" id="MF_00984"/>
    </source>
</evidence>
<evidence type="ECO:0000256" key="2">
    <source>
        <dbReference type="SAM" id="MobiDB-lite"/>
    </source>
</evidence>
<feature type="chain" id="PRO_0000411578" description="Single-stranded DNA-binding protein">
    <location>
        <begin position="1"/>
        <end position="163"/>
    </location>
</feature>
<feature type="domain" description="SSB" evidence="1">
    <location>
        <begin position="1"/>
        <end position="104"/>
    </location>
</feature>
<feature type="region of interest" description="Disordered" evidence="2">
    <location>
        <begin position="109"/>
        <end position="163"/>
    </location>
</feature>
<feature type="short sequence motif" description="Important for interaction with partner proteins" evidence="1">
    <location>
        <begin position="158"/>
        <end position="163"/>
    </location>
</feature>
<feature type="compositionally biased region" description="Low complexity" evidence="2">
    <location>
        <begin position="119"/>
        <end position="130"/>
    </location>
</feature>
<feature type="compositionally biased region" description="Polar residues" evidence="2">
    <location>
        <begin position="131"/>
        <end position="140"/>
    </location>
</feature>
<dbReference type="EMBL" id="BA000034">
    <property type="protein sequence ID" value="BAC63381.1"/>
    <property type="molecule type" value="Genomic_DNA"/>
</dbReference>
<dbReference type="RefSeq" id="WP_002983122.1">
    <property type="nucleotide sequence ID" value="NC_004606.1"/>
</dbReference>
<dbReference type="SMR" id="P0DF77"/>
<dbReference type="KEGG" id="sps:SPs0286"/>
<dbReference type="HOGENOM" id="CLU_078758_6_2_9"/>
<dbReference type="GO" id="GO:0009295">
    <property type="term" value="C:nucleoid"/>
    <property type="evidence" value="ECO:0007669"/>
    <property type="project" value="TreeGrafter"/>
</dbReference>
<dbReference type="GO" id="GO:0003697">
    <property type="term" value="F:single-stranded DNA binding"/>
    <property type="evidence" value="ECO:0007669"/>
    <property type="project" value="UniProtKB-UniRule"/>
</dbReference>
<dbReference type="GO" id="GO:0006310">
    <property type="term" value="P:DNA recombination"/>
    <property type="evidence" value="ECO:0007669"/>
    <property type="project" value="UniProtKB-UniRule"/>
</dbReference>
<dbReference type="GO" id="GO:0006281">
    <property type="term" value="P:DNA repair"/>
    <property type="evidence" value="ECO:0007669"/>
    <property type="project" value="UniProtKB-UniRule"/>
</dbReference>
<dbReference type="GO" id="GO:0006260">
    <property type="term" value="P:DNA replication"/>
    <property type="evidence" value="ECO:0007669"/>
    <property type="project" value="UniProtKB-UniRule"/>
</dbReference>
<dbReference type="CDD" id="cd04496">
    <property type="entry name" value="SSB_OBF"/>
    <property type="match status" value="1"/>
</dbReference>
<dbReference type="FunFam" id="2.40.50.140:FF:000084">
    <property type="entry name" value="Single-stranded DNA-binding protein"/>
    <property type="match status" value="1"/>
</dbReference>
<dbReference type="Gene3D" id="2.40.50.140">
    <property type="entry name" value="Nucleic acid-binding proteins"/>
    <property type="match status" value="1"/>
</dbReference>
<dbReference type="HAMAP" id="MF_00984">
    <property type="entry name" value="SSB"/>
    <property type="match status" value="1"/>
</dbReference>
<dbReference type="InterPro" id="IPR012340">
    <property type="entry name" value="NA-bd_OB-fold"/>
</dbReference>
<dbReference type="InterPro" id="IPR000424">
    <property type="entry name" value="Primosome_PriB/ssb"/>
</dbReference>
<dbReference type="InterPro" id="IPR011344">
    <property type="entry name" value="ssDNA-bd"/>
</dbReference>
<dbReference type="NCBIfam" id="NF005580">
    <property type="entry name" value="PRK07275.1"/>
    <property type="match status" value="1"/>
</dbReference>
<dbReference type="NCBIfam" id="TIGR00621">
    <property type="entry name" value="ssb"/>
    <property type="match status" value="1"/>
</dbReference>
<dbReference type="PANTHER" id="PTHR10302">
    <property type="entry name" value="SINGLE-STRANDED DNA-BINDING PROTEIN"/>
    <property type="match status" value="1"/>
</dbReference>
<dbReference type="PANTHER" id="PTHR10302:SF27">
    <property type="entry name" value="SINGLE-STRANDED DNA-BINDING PROTEIN"/>
    <property type="match status" value="1"/>
</dbReference>
<dbReference type="Pfam" id="PF00436">
    <property type="entry name" value="SSB"/>
    <property type="match status" value="1"/>
</dbReference>
<dbReference type="PIRSF" id="PIRSF002070">
    <property type="entry name" value="SSB"/>
    <property type="match status" value="1"/>
</dbReference>
<dbReference type="SUPFAM" id="SSF50249">
    <property type="entry name" value="Nucleic acid-binding proteins"/>
    <property type="match status" value="1"/>
</dbReference>
<dbReference type="PROSITE" id="PS50935">
    <property type="entry name" value="SSB"/>
    <property type="match status" value="1"/>
</dbReference>
<accession>P0DF77</accession>
<accession>P66853</accession>
<accession>Q99Y80</accession>
<proteinExistence type="inferred from homology"/>
<comment type="function">
    <text evidence="1">Plays an important role in DNA replication, recombination and repair. Binds to ssDNA and to an array of partner proteins to recruit them to their sites of action during DNA metabolism.</text>
</comment>
<comment type="subunit">
    <text evidence="1">Homotetramer.</text>
</comment>